<accession>P56795</accession>
<keyword id="KW-0150">Chloroplast</keyword>
<keyword id="KW-0934">Plastid</keyword>
<keyword id="KW-1185">Reference proteome</keyword>
<keyword id="KW-0687">Ribonucleoprotein</keyword>
<keyword id="KW-0689">Ribosomal protein</keyword>
<keyword id="KW-0694">RNA-binding</keyword>
<keyword id="KW-0699">rRNA-binding</keyword>
<geneLocation type="chloroplast"/>
<comment type="function">
    <text evidence="1">This protein binds specifically to 23S rRNA.</text>
</comment>
<comment type="function">
    <text evidence="1">The globular domain of the protein is located near the polypeptide exit tunnel on the outside of the subunit, while an extended beta-hairpin is found that lines the wall of the exit tunnel in the center of the 70S ribosome.</text>
</comment>
<comment type="subunit">
    <text evidence="1">Part of the 50S ribosomal subunit.</text>
</comment>
<comment type="subcellular location">
    <subcellularLocation>
        <location>Plastid</location>
        <location>Chloroplast</location>
    </subcellularLocation>
</comment>
<comment type="similarity">
    <text evidence="3">Belongs to the universal ribosomal protein uL22 family.</text>
</comment>
<reference key="1">
    <citation type="journal article" date="1999" name="DNA Res.">
        <title>Complete structure of the chloroplast genome of Arabidopsis thaliana.</title>
        <authorList>
            <person name="Sato S."/>
            <person name="Nakamura Y."/>
            <person name="Kaneko T."/>
            <person name="Asamizu E."/>
            <person name="Tabata S."/>
        </authorList>
    </citation>
    <scope>NUCLEOTIDE SEQUENCE [LARGE SCALE GENOMIC DNA]</scope>
    <source>
        <strain>cv. Columbia</strain>
    </source>
</reference>
<reference key="2">
    <citation type="journal article" date="2023" name="Plant Cell">
        <title>An updated nomenclature for plant ribosomal protein genes.</title>
        <authorList>
            <person name="Scarpin M.R."/>
            <person name="Busche M."/>
            <person name="Martinez R.E."/>
            <person name="Harper L.C."/>
            <person name="Reiser L."/>
            <person name="Szakonyi D."/>
            <person name="Merchante C."/>
            <person name="Lan T."/>
            <person name="Xiong W."/>
            <person name="Mo B."/>
            <person name="Tang G."/>
            <person name="Chen X."/>
            <person name="Bailey-Serres J."/>
            <person name="Browning K.S."/>
            <person name="Brunkard J.O."/>
        </authorList>
    </citation>
    <scope>NOMENCLATURE</scope>
</reference>
<gene>
    <name type="primary">rpl22</name>
    <name type="ordered locus">AtCg00810</name>
</gene>
<sequence>MIKKRKKKSYTEVYALGQYISMSAHKARRVIDQIRGRSYEEALMILELMPYRGCYPIFKLVYSAAANASHNKGFKETNLVISKAEVNQGNTVKKLKPRARGRSYPIKRSTCHITIVLEDISFYQQYEEYLMYLKKPGCSNENRNLTCYDTYSSGGLWDKK</sequence>
<evidence type="ECO:0000250" key="1"/>
<evidence type="ECO:0000303" key="2">
    <source>
    </source>
</evidence>
<evidence type="ECO:0000305" key="3"/>
<protein>
    <recommendedName>
        <fullName evidence="2">Large ribosomal subunit protein uL22c</fullName>
    </recommendedName>
    <alternativeName>
        <fullName>50S ribosomal protein L22, chloroplastic</fullName>
    </alternativeName>
</protein>
<name>RK22_ARATH</name>
<dbReference type="EMBL" id="AP000423">
    <property type="protein sequence ID" value="BAA84424.1"/>
    <property type="molecule type" value="Genomic_DNA"/>
</dbReference>
<dbReference type="RefSeq" id="NP_051097.1">
    <property type="nucleotide sequence ID" value="NC_000932.1"/>
</dbReference>
<dbReference type="SMR" id="P56795"/>
<dbReference type="BioGRID" id="29927">
    <property type="interactions" value="9"/>
</dbReference>
<dbReference type="FunCoup" id="P56795">
    <property type="interactions" value="398"/>
</dbReference>
<dbReference type="IntAct" id="P56795">
    <property type="interactions" value="1"/>
</dbReference>
<dbReference type="MINT" id="P56795"/>
<dbReference type="STRING" id="3702.P56795"/>
<dbReference type="PaxDb" id="3702-ATCG00810.1"/>
<dbReference type="ProteomicsDB" id="234848"/>
<dbReference type="EnsemblPlants" id="ATCG00810.1">
    <property type="protein sequence ID" value="ATCG00810.1"/>
    <property type="gene ID" value="ATCG00810"/>
</dbReference>
<dbReference type="GeneID" id="844721"/>
<dbReference type="Gramene" id="ATCG00810.1">
    <property type="protein sequence ID" value="ATCG00810.1"/>
    <property type="gene ID" value="ATCG00810"/>
</dbReference>
<dbReference type="KEGG" id="ath:ArthCp062"/>
<dbReference type="Araport" id="ATCG00810"/>
<dbReference type="TAIR" id="ATCG00810">
    <property type="gene designation" value="RPL22"/>
</dbReference>
<dbReference type="eggNOG" id="KOG1711">
    <property type="taxonomic scope" value="Eukaryota"/>
</dbReference>
<dbReference type="HOGENOM" id="CLU_083987_3_1_1"/>
<dbReference type="InParanoid" id="P56795"/>
<dbReference type="OMA" id="KRIQPRA"/>
<dbReference type="PRO" id="PR:P56795"/>
<dbReference type="Proteomes" id="UP000006548">
    <property type="component" value="Chloroplast Pltd"/>
</dbReference>
<dbReference type="ExpressionAtlas" id="P56795">
    <property type="expression patterns" value="baseline and differential"/>
</dbReference>
<dbReference type="GO" id="GO:0009507">
    <property type="term" value="C:chloroplast"/>
    <property type="evidence" value="ECO:0007005"/>
    <property type="project" value="TAIR"/>
</dbReference>
<dbReference type="GO" id="GO:0009941">
    <property type="term" value="C:chloroplast envelope"/>
    <property type="evidence" value="ECO:0007005"/>
    <property type="project" value="TAIR"/>
</dbReference>
<dbReference type="GO" id="GO:0009570">
    <property type="term" value="C:chloroplast stroma"/>
    <property type="evidence" value="ECO:0007005"/>
    <property type="project" value="TAIR"/>
</dbReference>
<dbReference type="GO" id="GO:0015934">
    <property type="term" value="C:large ribosomal subunit"/>
    <property type="evidence" value="ECO:0007669"/>
    <property type="project" value="InterPro"/>
</dbReference>
<dbReference type="GO" id="GO:0009536">
    <property type="term" value="C:plastid"/>
    <property type="evidence" value="ECO:0007005"/>
    <property type="project" value="TAIR"/>
</dbReference>
<dbReference type="GO" id="GO:0003729">
    <property type="term" value="F:mRNA binding"/>
    <property type="evidence" value="ECO:0000314"/>
    <property type="project" value="TAIR"/>
</dbReference>
<dbReference type="GO" id="GO:0019843">
    <property type="term" value="F:rRNA binding"/>
    <property type="evidence" value="ECO:0007669"/>
    <property type="project" value="UniProtKB-UniRule"/>
</dbReference>
<dbReference type="GO" id="GO:0003735">
    <property type="term" value="F:structural constituent of ribosome"/>
    <property type="evidence" value="ECO:0007669"/>
    <property type="project" value="InterPro"/>
</dbReference>
<dbReference type="GO" id="GO:0006412">
    <property type="term" value="P:translation"/>
    <property type="evidence" value="ECO:0007669"/>
    <property type="project" value="UniProtKB-UniRule"/>
</dbReference>
<dbReference type="CDD" id="cd00336">
    <property type="entry name" value="Ribosomal_L22"/>
    <property type="match status" value="1"/>
</dbReference>
<dbReference type="FunFam" id="3.90.470.10:FF:000006">
    <property type="entry name" value="50S ribosomal protein L22, chloroplastic"/>
    <property type="match status" value="1"/>
</dbReference>
<dbReference type="Gene3D" id="3.90.470.10">
    <property type="entry name" value="Ribosomal protein L22/L17"/>
    <property type="match status" value="1"/>
</dbReference>
<dbReference type="HAMAP" id="MF_01331_B">
    <property type="entry name" value="Ribosomal_uL22_B"/>
    <property type="match status" value="1"/>
</dbReference>
<dbReference type="InterPro" id="IPR001063">
    <property type="entry name" value="Ribosomal_uL22"/>
</dbReference>
<dbReference type="InterPro" id="IPR005727">
    <property type="entry name" value="Ribosomal_uL22_bac/chlpt-type"/>
</dbReference>
<dbReference type="InterPro" id="IPR047867">
    <property type="entry name" value="Ribosomal_uL22_bac/org-type"/>
</dbReference>
<dbReference type="InterPro" id="IPR018260">
    <property type="entry name" value="Ribosomal_uL22_CS"/>
</dbReference>
<dbReference type="InterPro" id="IPR036394">
    <property type="entry name" value="Ribosomal_uL22_sf"/>
</dbReference>
<dbReference type="NCBIfam" id="TIGR01044">
    <property type="entry name" value="rplV_bact"/>
    <property type="match status" value="1"/>
</dbReference>
<dbReference type="PANTHER" id="PTHR13501">
    <property type="entry name" value="CHLOROPLAST 50S RIBOSOMAL PROTEIN L22-RELATED"/>
    <property type="match status" value="1"/>
</dbReference>
<dbReference type="PANTHER" id="PTHR13501:SF10">
    <property type="entry name" value="LARGE RIBOSOMAL SUBUNIT PROTEIN UL22M"/>
    <property type="match status" value="1"/>
</dbReference>
<dbReference type="Pfam" id="PF00237">
    <property type="entry name" value="Ribosomal_L22"/>
    <property type="match status" value="1"/>
</dbReference>
<dbReference type="SUPFAM" id="SSF54843">
    <property type="entry name" value="Ribosomal protein L22"/>
    <property type="match status" value="1"/>
</dbReference>
<dbReference type="PROSITE" id="PS00464">
    <property type="entry name" value="RIBOSOMAL_L22"/>
    <property type="match status" value="1"/>
</dbReference>
<feature type="chain" id="PRO_0000125296" description="Large ribosomal subunit protein uL22c">
    <location>
        <begin position="1"/>
        <end position="160"/>
    </location>
</feature>
<proteinExistence type="inferred from homology"/>
<organism>
    <name type="scientific">Arabidopsis thaliana</name>
    <name type="common">Mouse-ear cress</name>
    <dbReference type="NCBI Taxonomy" id="3702"/>
    <lineage>
        <taxon>Eukaryota</taxon>
        <taxon>Viridiplantae</taxon>
        <taxon>Streptophyta</taxon>
        <taxon>Embryophyta</taxon>
        <taxon>Tracheophyta</taxon>
        <taxon>Spermatophyta</taxon>
        <taxon>Magnoliopsida</taxon>
        <taxon>eudicotyledons</taxon>
        <taxon>Gunneridae</taxon>
        <taxon>Pentapetalae</taxon>
        <taxon>rosids</taxon>
        <taxon>malvids</taxon>
        <taxon>Brassicales</taxon>
        <taxon>Brassicaceae</taxon>
        <taxon>Camelineae</taxon>
        <taxon>Arabidopsis</taxon>
    </lineage>
</organism>